<evidence type="ECO:0000255" key="1">
    <source>
        <dbReference type="HAMAP-Rule" id="MF_01322"/>
    </source>
</evidence>
<evidence type="ECO:0000256" key="2">
    <source>
        <dbReference type="SAM" id="MobiDB-lite"/>
    </source>
</evidence>
<dbReference type="EC" id="2.7.7.6" evidence="1"/>
<dbReference type="EMBL" id="AE007869">
    <property type="protein sequence ID" value="AAK87715.2"/>
    <property type="molecule type" value="Genomic_DNA"/>
</dbReference>
<dbReference type="PIR" id="AI2816">
    <property type="entry name" value="AI2816"/>
</dbReference>
<dbReference type="PIR" id="B97595">
    <property type="entry name" value="B97595"/>
</dbReference>
<dbReference type="RefSeq" id="NP_354930.2">
    <property type="nucleotide sequence ID" value="NC_003062.2"/>
</dbReference>
<dbReference type="RefSeq" id="WP_006316440.1">
    <property type="nucleotide sequence ID" value="NC_003062.2"/>
</dbReference>
<dbReference type="SMR" id="Q8UE09"/>
<dbReference type="STRING" id="176299.Atu1955"/>
<dbReference type="EnsemblBacteria" id="AAK87715">
    <property type="protein sequence ID" value="AAK87715"/>
    <property type="gene ID" value="Atu1955"/>
</dbReference>
<dbReference type="GeneID" id="1139411"/>
<dbReference type="KEGG" id="atu:Atu1955"/>
<dbReference type="PATRIC" id="fig|176299.10.peg.1967"/>
<dbReference type="eggNOG" id="COG0086">
    <property type="taxonomic scope" value="Bacteria"/>
</dbReference>
<dbReference type="HOGENOM" id="CLU_000524_3_1_5"/>
<dbReference type="OrthoDB" id="9815296at2"/>
<dbReference type="PhylomeDB" id="Q8UE09"/>
<dbReference type="BioCyc" id="AGRO:ATU1955-MONOMER"/>
<dbReference type="Proteomes" id="UP000000813">
    <property type="component" value="Chromosome circular"/>
</dbReference>
<dbReference type="GO" id="GO:0000428">
    <property type="term" value="C:DNA-directed RNA polymerase complex"/>
    <property type="evidence" value="ECO:0007669"/>
    <property type="project" value="UniProtKB-KW"/>
</dbReference>
<dbReference type="GO" id="GO:0003677">
    <property type="term" value="F:DNA binding"/>
    <property type="evidence" value="ECO:0007669"/>
    <property type="project" value="UniProtKB-UniRule"/>
</dbReference>
<dbReference type="GO" id="GO:0003899">
    <property type="term" value="F:DNA-directed RNA polymerase activity"/>
    <property type="evidence" value="ECO:0007669"/>
    <property type="project" value="UniProtKB-UniRule"/>
</dbReference>
<dbReference type="GO" id="GO:0000287">
    <property type="term" value="F:magnesium ion binding"/>
    <property type="evidence" value="ECO:0007669"/>
    <property type="project" value="UniProtKB-UniRule"/>
</dbReference>
<dbReference type="GO" id="GO:0008270">
    <property type="term" value="F:zinc ion binding"/>
    <property type="evidence" value="ECO:0007669"/>
    <property type="project" value="UniProtKB-UniRule"/>
</dbReference>
<dbReference type="GO" id="GO:0006351">
    <property type="term" value="P:DNA-templated transcription"/>
    <property type="evidence" value="ECO:0007669"/>
    <property type="project" value="UniProtKB-UniRule"/>
</dbReference>
<dbReference type="CDD" id="cd02655">
    <property type="entry name" value="RNAP_beta'_C"/>
    <property type="match status" value="1"/>
</dbReference>
<dbReference type="CDD" id="cd01609">
    <property type="entry name" value="RNAP_beta'_N"/>
    <property type="match status" value="1"/>
</dbReference>
<dbReference type="Gene3D" id="1.10.132.30">
    <property type="match status" value="1"/>
</dbReference>
<dbReference type="Gene3D" id="1.10.150.390">
    <property type="match status" value="1"/>
</dbReference>
<dbReference type="Gene3D" id="1.10.1790.20">
    <property type="match status" value="1"/>
</dbReference>
<dbReference type="Gene3D" id="1.10.40.90">
    <property type="match status" value="1"/>
</dbReference>
<dbReference type="Gene3D" id="2.40.40.20">
    <property type="match status" value="1"/>
</dbReference>
<dbReference type="Gene3D" id="2.40.50.100">
    <property type="match status" value="3"/>
</dbReference>
<dbReference type="Gene3D" id="4.10.860.120">
    <property type="entry name" value="RNA polymerase II, clamp domain"/>
    <property type="match status" value="1"/>
</dbReference>
<dbReference type="Gene3D" id="1.10.274.100">
    <property type="entry name" value="RNA polymerase Rpb1, domain 3"/>
    <property type="match status" value="2"/>
</dbReference>
<dbReference type="HAMAP" id="MF_01322">
    <property type="entry name" value="RNApol_bact_RpoC"/>
    <property type="match status" value="1"/>
</dbReference>
<dbReference type="InterPro" id="IPR045867">
    <property type="entry name" value="DNA-dir_RpoC_beta_prime"/>
</dbReference>
<dbReference type="InterPro" id="IPR012754">
    <property type="entry name" value="DNA-dir_RpoC_beta_prime_bact"/>
</dbReference>
<dbReference type="InterPro" id="IPR000722">
    <property type="entry name" value="RNA_pol_asu"/>
</dbReference>
<dbReference type="InterPro" id="IPR006592">
    <property type="entry name" value="RNA_pol_N"/>
</dbReference>
<dbReference type="InterPro" id="IPR007080">
    <property type="entry name" value="RNA_pol_Rpb1_1"/>
</dbReference>
<dbReference type="InterPro" id="IPR007066">
    <property type="entry name" value="RNA_pol_Rpb1_3"/>
</dbReference>
<dbReference type="InterPro" id="IPR042102">
    <property type="entry name" value="RNA_pol_Rpb1_3_sf"/>
</dbReference>
<dbReference type="InterPro" id="IPR007083">
    <property type="entry name" value="RNA_pol_Rpb1_4"/>
</dbReference>
<dbReference type="InterPro" id="IPR007081">
    <property type="entry name" value="RNA_pol_Rpb1_5"/>
</dbReference>
<dbReference type="InterPro" id="IPR044893">
    <property type="entry name" value="RNA_pol_Rpb1_clamp_domain"/>
</dbReference>
<dbReference type="InterPro" id="IPR038120">
    <property type="entry name" value="Rpb1_funnel_sf"/>
</dbReference>
<dbReference type="NCBIfam" id="TIGR02386">
    <property type="entry name" value="rpoC_TIGR"/>
    <property type="match status" value="1"/>
</dbReference>
<dbReference type="PANTHER" id="PTHR19376">
    <property type="entry name" value="DNA-DIRECTED RNA POLYMERASE"/>
    <property type="match status" value="1"/>
</dbReference>
<dbReference type="PANTHER" id="PTHR19376:SF54">
    <property type="entry name" value="DNA-DIRECTED RNA POLYMERASE SUBUNIT BETA"/>
    <property type="match status" value="1"/>
</dbReference>
<dbReference type="Pfam" id="PF04997">
    <property type="entry name" value="RNA_pol_Rpb1_1"/>
    <property type="match status" value="1"/>
</dbReference>
<dbReference type="Pfam" id="PF00623">
    <property type="entry name" value="RNA_pol_Rpb1_2"/>
    <property type="match status" value="1"/>
</dbReference>
<dbReference type="Pfam" id="PF04983">
    <property type="entry name" value="RNA_pol_Rpb1_3"/>
    <property type="match status" value="1"/>
</dbReference>
<dbReference type="Pfam" id="PF05000">
    <property type="entry name" value="RNA_pol_Rpb1_4"/>
    <property type="match status" value="1"/>
</dbReference>
<dbReference type="Pfam" id="PF04998">
    <property type="entry name" value="RNA_pol_Rpb1_5"/>
    <property type="match status" value="1"/>
</dbReference>
<dbReference type="SMART" id="SM00663">
    <property type="entry name" value="RPOLA_N"/>
    <property type="match status" value="1"/>
</dbReference>
<dbReference type="SUPFAM" id="SSF64484">
    <property type="entry name" value="beta and beta-prime subunits of DNA dependent RNA-polymerase"/>
    <property type="match status" value="1"/>
</dbReference>
<accession>Q8UE09</accession>
<protein>
    <recommendedName>
        <fullName evidence="1">DNA-directed RNA polymerase subunit beta'</fullName>
        <shortName evidence="1">RNAP subunit beta'</shortName>
        <ecNumber evidence="1">2.7.7.6</ecNumber>
    </recommendedName>
    <alternativeName>
        <fullName evidence="1">RNA polymerase subunit beta'</fullName>
    </alternativeName>
    <alternativeName>
        <fullName evidence="1">Transcriptase subunit beta'</fullName>
    </alternativeName>
</protein>
<name>RPOC_AGRFC</name>
<organism>
    <name type="scientific">Agrobacterium fabrum (strain C58 / ATCC 33970)</name>
    <name type="common">Agrobacterium tumefaciens (strain C58)</name>
    <dbReference type="NCBI Taxonomy" id="176299"/>
    <lineage>
        <taxon>Bacteria</taxon>
        <taxon>Pseudomonadati</taxon>
        <taxon>Pseudomonadota</taxon>
        <taxon>Alphaproteobacteria</taxon>
        <taxon>Hyphomicrobiales</taxon>
        <taxon>Rhizobiaceae</taxon>
        <taxon>Rhizobium/Agrobacterium group</taxon>
        <taxon>Agrobacterium</taxon>
        <taxon>Agrobacterium tumefaciens complex</taxon>
    </lineage>
</organism>
<proteinExistence type="inferred from homology"/>
<keyword id="KW-0240">DNA-directed RNA polymerase</keyword>
<keyword id="KW-0460">Magnesium</keyword>
<keyword id="KW-0479">Metal-binding</keyword>
<keyword id="KW-0548">Nucleotidyltransferase</keyword>
<keyword id="KW-1185">Reference proteome</keyword>
<keyword id="KW-0804">Transcription</keyword>
<keyword id="KW-0808">Transferase</keyword>
<keyword id="KW-0862">Zinc</keyword>
<reference key="1">
    <citation type="journal article" date="2001" name="Science">
        <title>The genome of the natural genetic engineer Agrobacterium tumefaciens C58.</title>
        <authorList>
            <person name="Wood D.W."/>
            <person name="Setubal J.C."/>
            <person name="Kaul R."/>
            <person name="Monks D.E."/>
            <person name="Kitajima J.P."/>
            <person name="Okura V.K."/>
            <person name="Zhou Y."/>
            <person name="Chen L."/>
            <person name="Wood G.E."/>
            <person name="Almeida N.F. Jr."/>
            <person name="Woo L."/>
            <person name="Chen Y."/>
            <person name="Paulsen I.T."/>
            <person name="Eisen J.A."/>
            <person name="Karp P.D."/>
            <person name="Bovee D. Sr."/>
            <person name="Chapman P."/>
            <person name="Clendenning J."/>
            <person name="Deatherage G."/>
            <person name="Gillet W."/>
            <person name="Grant C."/>
            <person name="Kutyavin T."/>
            <person name="Levy R."/>
            <person name="Li M.-J."/>
            <person name="McClelland E."/>
            <person name="Palmieri A."/>
            <person name="Raymond C."/>
            <person name="Rouse G."/>
            <person name="Saenphimmachak C."/>
            <person name="Wu Z."/>
            <person name="Romero P."/>
            <person name="Gordon D."/>
            <person name="Zhang S."/>
            <person name="Yoo H."/>
            <person name="Tao Y."/>
            <person name="Biddle P."/>
            <person name="Jung M."/>
            <person name="Krespan W."/>
            <person name="Perry M."/>
            <person name="Gordon-Kamm B."/>
            <person name="Liao L."/>
            <person name="Kim S."/>
            <person name="Hendrick C."/>
            <person name="Zhao Z.-Y."/>
            <person name="Dolan M."/>
            <person name="Chumley F."/>
            <person name="Tingey S.V."/>
            <person name="Tomb J.-F."/>
            <person name="Gordon M.P."/>
            <person name="Olson M.V."/>
            <person name="Nester E.W."/>
        </authorList>
    </citation>
    <scope>NUCLEOTIDE SEQUENCE [LARGE SCALE GENOMIC DNA]</scope>
    <source>
        <strain>C58 / ATCC 33970</strain>
    </source>
</reference>
<reference key="2">
    <citation type="journal article" date="2001" name="Science">
        <title>Genome sequence of the plant pathogen and biotechnology agent Agrobacterium tumefaciens C58.</title>
        <authorList>
            <person name="Goodner B."/>
            <person name="Hinkle G."/>
            <person name="Gattung S."/>
            <person name="Miller N."/>
            <person name="Blanchard M."/>
            <person name="Qurollo B."/>
            <person name="Goldman B.S."/>
            <person name="Cao Y."/>
            <person name="Askenazi M."/>
            <person name="Halling C."/>
            <person name="Mullin L."/>
            <person name="Houmiel K."/>
            <person name="Gordon J."/>
            <person name="Vaudin M."/>
            <person name="Iartchouk O."/>
            <person name="Epp A."/>
            <person name="Liu F."/>
            <person name="Wollam C."/>
            <person name="Allinger M."/>
            <person name="Doughty D."/>
            <person name="Scott C."/>
            <person name="Lappas C."/>
            <person name="Markelz B."/>
            <person name="Flanagan C."/>
            <person name="Crowell C."/>
            <person name="Gurson J."/>
            <person name="Lomo C."/>
            <person name="Sear C."/>
            <person name="Strub G."/>
            <person name="Cielo C."/>
            <person name="Slater S."/>
        </authorList>
    </citation>
    <scope>NUCLEOTIDE SEQUENCE [LARGE SCALE GENOMIC DNA]</scope>
    <source>
        <strain>C58 / ATCC 33970</strain>
    </source>
</reference>
<feature type="chain" id="PRO_0000067700" description="DNA-directed RNA polymerase subunit beta'">
    <location>
        <begin position="1"/>
        <end position="1402"/>
    </location>
</feature>
<feature type="region of interest" description="Disordered" evidence="2">
    <location>
        <begin position="1379"/>
        <end position="1402"/>
    </location>
</feature>
<feature type="compositionally biased region" description="Polar residues" evidence="2">
    <location>
        <begin position="1385"/>
        <end position="1395"/>
    </location>
</feature>
<feature type="binding site" evidence="1">
    <location>
        <position position="71"/>
    </location>
    <ligand>
        <name>Zn(2+)</name>
        <dbReference type="ChEBI" id="CHEBI:29105"/>
        <label>1</label>
    </ligand>
</feature>
<feature type="binding site" evidence="1">
    <location>
        <position position="73"/>
    </location>
    <ligand>
        <name>Zn(2+)</name>
        <dbReference type="ChEBI" id="CHEBI:29105"/>
        <label>1</label>
    </ligand>
</feature>
<feature type="binding site" evidence="1">
    <location>
        <position position="86"/>
    </location>
    <ligand>
        <name>Zn(2+)</name>
        <dbReference type="ChEBI" id="CHEBI:29105"/>
        <label>1</label>
    </ligand>
</feature>
<feature type="binding site" evidence="1">
    <location>
        <position position="89"/>
    </location>
    <ligand>
        <name>Zn(2+)</name>
        <dbReference type="ChEBI" id="CHEBI:29105"/>
        <label>1</label>
    </ligand>
</feature>
<feature type="binding site" evidence="1">
    <location>
        <position position="462"/>
    </location>
    <ligand>
        <name>Mg(2+)</name>
        <dbReference type="ChEBI" id="CHEBI:18420"/>
    </ligand>
</feature>
<feature type="binding site" evidence="1">
    <location>
        <position position="464"/>
    </location>
    <ligand>
        <name>Mg(2+)</name>
        <dbReference type="ChEBI" id="CHEBI:18420"/>
    </ligand>
</feature>
<feature type="binding site" evidence="1">
    <location>
        <position position="466"/>
    </location>
    <ligand>
        <name>Mg(2+)</name>
        <dbReference type="ChEBI" id="CHEBI:18420"/>
    </ligand>
</feature>
<feature type="binding site" evidence="1">
    <location>
        <position position="811"/>
    </location>
    <ligand>
        <name>Zn(2+)</name>
        <dbReference type="ChEBI" id="CHEBI:29105"/>
        <label>2</label>
    </ligand>
</feature>
<feature type="binding site" evidence="1">
    <location>
        <position position="885"/>
    </location>
    <ligand>
        <name>Zn(2+)</name>
        <dbReference type="ChEBI" id="CHEBI:29105"/>
        <label>2</label>
    </ligand>
</feature>
<feature type="binding site" evidence="1">
    <location>
        <position position="892"/>
    </location>
    <ligand>
        <name>Zn(2+)</name>
        <dbReference type="ChEBI" id="CHEBI:29105"/>
        <label>2</label>
    </ligand>
</feature>
<feature type="binding site" evidence="1">
    <location>
        <position position="895"/>
    </location>
    <ligand>
        <name>Zn(2+)</name>
        <dbReference type="ChEBI" id="CHEBI:29105"/>
        <label>2</label>
    </ligand>
</feature>
<sequence>MNQEVMNLFNPQVPAQHFDSIRISIASPEKILSWSYGEIKKPETINYRTFKPERDGLFCARIFGPIKDYECLCGKYKRMKYKGIICEKCGVEVTLSRVRRERMGHIELAAPVAHIWFLKSLPSRISTLLDMTLKDVERVLYFENYIVTEPGLTSLKQNQLLSEEEYMIAVDEFGEDQFTAMIGAEAIYEMLASMNLEKIAGDLRAELAETTSDLKQKKFMKRLKIVENFMESGNRPEWMIMKVVPVIPPDLRPLVPLDGGRFATSDLNDLYRRVINRNNRLKRLIELRAPGIIIRNEKRMLQESVDALFDNGRRGRVITGANKRPLKSLSDMLKGKQGRFRQNLLGKRVDYSGRSVIVTGPELKLHQCGLPKKMALELFKPFIYARLDAKGYSSTVKQAKKLVEKEKPEVWDILDEVIREHPVLLNRAPTLHRLGIQAFEPMLVEGKAIQLHPLVCTAFNADFDGDQMAVHVPLSLEAQLEARVLMMSTNNILHPANGHPIIVPSQDMVLGLYYLSIMNQNEPGEGMAFSDIGELHHALENKVVTLHAKIRGRFKTVDADGKPVSKIHETTPGRMLIGELLPKNVNVPFDTCNQEMTKKNISKMIDTVYRHCGQKDTVIFCDRIMQLGFSHACRAGISFGKDDMVIPDSKVKIVGDTEALVKEYEQQYNDGLITQGEKYNKVVDAWGKATEKVAEEMMARIKAVEFDPETGRQKPMNSIYMMSHSGARGSPNQMRQLGGMRGLMAKPSGEIIETPIISNFKEGLTVNEYFNSTHGARKGLADTALKTANSGYLTRRLVDVAQDCIVNSVDCGTDKGLTMTAIVDAGQIVASIGARILGRTALDDIDNPVTGENIVKAGTLIDEADVAIIEKAGIQSVRIRSALTCEVQIGVCGVCYGRDLARGTPVNMGEAVGVIAAQSIGEPGTQLTMRTFHLGGTANVVDQSFLEASYEGTIQIKNRNILRNSEGVLIAMGRNMSVTILDERGVERSSQRVAYGSKIFVDDGDKVKRGQRLAEWDPYTRPMMTEVEGTVHFEDLVDGLSVLEATDESTGITKRQVIDWRSTPRGSDLKPAIIIKDASGAVAKLSRGGEARFHLSVDAILSVEPGSKVSQGDVLARSPLESAKTKDITGGLPRVAELFEARRPKDHAIIAEIDGTIRLGRDYKNKRRVMIEPAEDGVEPVEYLIPKGKPFHLQEGDYIEKGEYILDGNPAPHDILAIKGVEALASYLVNEIQEVYRLQGVVINDKHIEVIVRQMLQKVEITDAGDSQYIVGDNVDRIEMEDMNDRLIEEGKKPAYGEPVLLGITKASLQTPSFISAASFQETTKVLTEAAIAGKTDTLQGLKENVIVGRLIPAGTGGTMTQIRRIATSRDDLILEERRKGTGAGSANQMLQDMTDQVPAAE</sequence>
<gene>
    <name evidence="1" type="primary">rpoC</name>
    <name type="ordered locus">Atu1955</name>
    <name type="ORF">AGR_C_3568</name>
</gene>
<comment type="function">
    <text evidence="1">DNA-dependent RNA polymerase catalyzes the transcription of DNA into RNA using the four ribonucleoside triphosphates as substrates.</text>
</comment>
<comment type="catalytic activity">
    <reaction evidence="1">
        <text>RNA(n) + a ribonucleoside 5'-triphosphate = RNA(n+1) + diphosphate</text>
        <dbReference type="Rhea" id="RHEA:21248"/>
        <dbReference type="Rhea" id="RHEA-COMP:14527"/>
        <dbReference type="Rhea" id="RHEA-COMP:17342"/>
        <dbReference type="ChEBI" id="CHEBI:33019"/>
        <dbReference type="ChEBI" id="CHEBI:61557"/>
        <dbReference type="ChEBI" id="CHEBI:140395"/>
        <dbReference type="EC" id="2.7.7.6"/>
    </reaction>
</comment>
<comment type="cofactor">
    <cofactor evidence="1">
        <name>Mg(2+)</name>
        <dbReference type="ChEBI" id="CHEBI:18420"/>
    </cofactor>
    <text evidence="1">Binds 1 Mg(2+) ion per subunit.</text>
</comment>
<comment type="cofactor">
    <cofactor evidence="1">
        <name>Zn(2+)</name>
        <dbReference type="ChEBI" id="CHEBI:29105"/>
    </cofactor>
    <text evidence="1">Binds 2 Zn(2+) ions per subunit.</text>
</comment>
<comment type="subunit">
    <text evidence="1">The RNAP catalytic core consists of 2 alpha, 1 beta, 1 beta' and 1 omega subunit. When a sigma factor is associated with the core the holoenzyme is formed, which can initiate transcription.</text>
</comment>
<comment type="similarity">
    <text evidence="1">Belongs to the RNA polymerase beta' chain family.</text>
</comment>